<gene>
    <name evidence="2" type="primary">trmB</name>
    <name type="ordered locus">MCA1532</name>
</gene>
<name>TRMB_METCA</name>
<evidence type="ECO:0000250" key="1"/>
<evidence type="ECO:0000255" key="2">
    <source>
        <dbReference type="HAMAP-Rule" id="MF_01057"/>
    </source>
</evidence>
<keyword id="KW-0489">Methyltransferase</keyword>
<keyword id="KW-1185">Reference proteome</keyword>
<keyword id="KW-0949">S-adenosyl-L-methionine</keyword>
<keyword id="KW-0808">Transferase</keyword>
<keyword id="KW-0819">tRNA processing</keyword>
<organism>
    <name type="scientific">Methylococcus capsulatus (strain ATCC 33009 / NCIMB 11132 / Bath)</name>
    <dbReference type="NCBI Taxonomy" id="243233"/>
    <lineage>
        <taxon>Bacteria</taxon>
        <taxon>Pseudomonadati</taxon>
        <taxon>Pseudomonadota</taxon>
        <taxon>Gammaproteobacteria</taxon>
        <taxon>Methylococcales</taxon>
        <taxon>Methylococcaceae</taxon>
        <taxon>Methylococcus</taxon>
    </lineage>
</organism>
<dbReference type="EC" id="2.1.1.33" evidence="2"/>
<dbReference type="EMBL" id="AE017282">
    <property type="protein sequence ID" value="AAU92229.1"/>
    <property type="molecule type" value="Genomic_DNA"/>
</dbReference>
<dbReference type="RefSeq" id="WP_010960804.1">
    <property type="nucleotide sequence ID" value="NC_002977.6"/>
</dbReference>
<dbReference type="SMR" id="Q608G0"/>
<dbReference type="STRING" id="243233.MCA1532"/>
<dbReference type="GeneID" id="88223802"/>
<dbReference type="KEGG" id="mca:MCA1532"/>
<dbReference type="eggNOG" id="COG0220">
    <property type="taxonomic scope" value="Bacteria"/>
</dbReference>
<dbReference type="HOGENOM" id="CLU_050910_0_1_6"/>
<dbReference type="UniPathway" id="UPA00989"/>
<dbReference type="Proteomes" id="UP000006821">
    <property type="component" value="Chromosome"/>
</dbReference>
<dbReference type="GO" id="GO:0043527">
    <property type="term" value="C:tRNA methyltransferase complex"/>
    <property type="evidence" value="ECO:0007669"/>
    <property type="project" value="TreeGrafter"/>
</dbReference>
<dbReference type="GO" id="GO:0008176">
    <property type="term" value="F:tRNA (guanine(46)-N7)-methyltransferase activity"/>
    <property type="evidence" value="ECO:0007669"/>
    <property type="project" value="UniProtKB-UniRule"/>
</dbReference>
<dbReference type="CDD" id="cd02440">
    <property type="entry name" value="AdoMet_MTases"/>
    <property type="match status" value="1"/>
</dbReference>
<dbReference type="Gene3D" id="3.40.50.150">
    <property type="entry name" value="Vaccinia Virus protein VP39"/>
    <property type="match status" value="1"/>
</dbReference>
<dbReference type="HAMAP" id="MF_01057">
    <property type="entry name" value="tRNA_methyltr_TrmB"/>
    <property type="match status" value="1"/>
</dbReference>
<dbReference type="InterPro" id="IPR029063">
    <property type="entry name" value="SAM-dependent_MTases_sf"/>
</dbReference>
<dbReference type="InterPro" id="IPR003358">
    <property type="entry name" value="tRNA_(Gua-N-7)_MeTrfase_Trmb"/>
</dbReference>
<dbReference type="InterPro" id="IPR055361">
    <property type="entry name" value="tRNA_methyltr_TrmB_bact"/>
</dbReference>
<dbReference type="NCBIfam" id="TIGR00091">
    <property type="entry name" value="tRNA (guanosine(46)-N7)-methyltransferase TrmB"/>
    <property type="match status" value="1"/>
</dbReference>
<dbReference type="PANTHER" id="PTHR23417">
    <property type="entry name" value="3-DEOXY-D-MANNO-OCTULOSONIC-ACID TRANSFERASE/TRNA GUANINE-N 7 - -METHYLTRANSFERASE"/>
    <property type="match status" value="1"/>
</dbReference>
<dbReference type="PANTHER" id="PTHR23417:SF14">
    <property type="entry name" value="PENTACOTRIPEPTIDE-REPEAT REGION OF PRORP DOMAIN-CONTAINING PROTEIN"/>
    <property type="match status" value="1"/>
</dbReference>
<dbReference type="Pfam" id="PF02390">
    <property type="entry name" value="Methyltransf_4"/>
    <property type="match status" value="1"/>
</dbReference>
<dbReference type="SUPFAM" id="SSF53335">
    <property type="entry name" value="S-adenosyl-L-methionine-dependent methyltransferases"/>
    <property type="match status" value="1"/>
</dbReference>
<dbReference type="PROSITE" id="PS51625">
    <property type="entry name" value="SAM_MT_TRMB"/>
    <property type="match status" value="1"/>
</dbReference>
<protein>
    <recommendedName>
        <fullName evidence="2">tRNA (guanine-N(7)-)-methyltransferase</fullName>
        <ecNumber evidence="2">2.1.1.33</ecNumber>
    </recommendedName>
    <alternativeName>
        <fullName evidence="2">tRNA (guanine(46)-N(7))-methyltransferase</fullName>
    </alternativeName>
    <alternativeName>
        <fullName evidence="2">tRNA(m7G46)-methyltransferase</fullName>
    </alternativeName>
</protein>
<sequence>MTDTLMNADPPRRIRSFVLRQGRITASQKNALENLWPRYGLDPAAAFDPAAVFGRRAPLTLEIGFGNGESLAAMAQSLPAEDFIGAEVHPPGIGHLLIELERRGLDNVRVFRVDAVELLENCIPEGALARILVFFPDPWHKQRHKKRRLVSPAFARLAASRLAPGGVFHAATDWEDYAMQMLEVLNGCETLVNQAPDGRFSERPAYRTPTKFEQRGQRLGHGVWDLVYRRS</sequence>
<reference key="1">
    <citation type="journal article" date="2004" name="PLoS Biol.">
        <title>Genomic insights into methanotrophy: the complete genome sequence of Methylococcus capsulatus (Bath).</title>
        <authorList>
            <person name="Ward N.L."/>
            <person name="Larsen O."/>
            <person name="Sakwa J."/>
            <person name="Bruseth L."/>
            <person name="Khouri H.M."/>
            <person name="Durkin A.S."/>
            <person name="Dimitrov G."/>
            <person name="Jiang L."/>
            <person name="Scanlan D."/>
            <person name="Kang K.H."/>
            <person name="Lewis M.R."/>
            <person name="Nelson K.E."/>
            <person name="Methe B.A."/>
            <person name="Wu M."/>
            <person name="Heidelberg J.F."/>
            <person name="Paulsen I.T."/>
            <person name="Fouts D.E."/>
            <person name="Ravel J."/>
            <person name="Tettelin H."/>
            <person name="Ren Q."/>
            <person name="Read T.D."/>
            <person name="DeBoy R.T."/>
            <person name="Seshadri R."/>
            <person name="Salzberg S.L."/>
            <person name="Jensen H.B."/>
            <person name="Birkeland N.K."/>
            <person name="Nelson W.C."/>
            <person name="Dodson R.J."/>
            <person name="Grindhaug S.H."/>
            <person name="Holt I.E."/>
            <person name="Eidhammer I."/>
            <person name="Jonasen I."/>
            <person name="Vanaken S."/>
            <person name="Utterback T.R."/>
            <person name="Feldblyum T.V."/>
            <person name="Fraser C.M."/>
            <person name="Lillehaug J.R."/>
            <person name="Eisen J.A."/>
        </authorList>
    </citation>
    <scope>NUCLEOTIDE SEQUENCE [LARGE SCALE GENOMIC DNA]</scope>
    <source>
        <strain>ATCC 33009 / NCIMB 11132 / Bath</strain>
    </source>
</reference>
<comment type="function">
    <text evidence="2">Catalyzes the formation of N(7)-methylguanine at position 46 (m7G46) in tRNA.</text>
</comment>
<comment type="catalytic activity">
    <reaction evidence="2">
        <text>guanosine(46) in tRNA + S-adenosyl-L-methionine = N(7)-methylguanosine(46) in tRNA + S-adenosyl-L-homocysteine</text>
        <dbReference type="Rhea" id="RHEA:42708"/>
        <dbReference type="Rhea" id="RHEA-COMP:10188"/>
        <dbReference type="Rhea" id="RHEA-COMP:10189"/>
        <dbReference type="ChEBI" id="CHEBI:57856"/>
        <dbReference type="ChEBI" id="CHEBI:59789"/>
        <dbReference type="ChEBI" id="CHEBI:74269"/>
        <dbReference type="ChEBI" id="CHEBI:74480"/>
        <dbReference type="EC" id="2.1.1.33"/>
    </reaction>
</comment>
<comment type="pathway">
    <text evidence="2">tRNA modification; N(7)-methylguanine-tRNA biosynthesis.</text>
</comment>
<comment type="similarity">
    <text evidence="2">Belongs to the class I-like SAM-binding methyltransferase superfamily. TrmB family.</text>
</comment>
<proteinExistence type="inferred from homology"/>
<feature type="chain" id="PRO_0000171348" description="tRNA (guanine-N(7)-)-methyltransferase">
    <location>
        <begin position="1"/>
        <end position="231"/>
    </location>
</feature>
<feature type="active site" evidence="1">
    <location>
        <position position="137"/>
    </location>
</feature>
<feature type="binding site" evidence="2">
    <location>
        <position position="62"/>
    </location>
    <ligand>
        <name>S-adenosyl-L-methionine</name>
        <dbReference type="ChEBI" id="CHEBI:59789"/>
    </ligand>
</feature>
<feature type="binding site" evidence="2">
    <location>
        <position position="87"/>
    </location>
    <ligand>
        <name>S-adenosyl-L-methionine</name>
        <dbReference type="ChEBI" id="CHEBI:59789"/>
    </ligand>
</feature>
<feature type="binding site" evidence="2">
    <location>
        <position position="114"/>
    </location>
    <ligand>
        <name>S-adenosyl-L-methionine</name>
        <dbReference type="ChEBI" id="CHEBI:59789"/>
    </ligand>
</feature>
<feature type="binding site" evidence="2">
    <location>
        <position position="137"/>
    </location>
    <ligand>
        <name>S-adenosyl-L-methionine</name>
        <dbReference type="ChEBI" id="CHEBI:59789"/>
    </ligand>
</feature>
<feature type="binding site" evidence="2">
    <location>
        <position position="141"/>
    </location>
    <ligand>
        <name>substrate</name>
    </ligand>
</feature>
<feature type="binding site" evidence="2">
    <location>
        <position position="173"/>
    </location>
    <ligand>
        <name>substrate</name>
    </ligand>
</feature>
<feature type="binding site" evidence="2">
    <location>
        <begin position="210"/>
        <end position="213"/>
    </location>
    <ligand>
        <name>substrate</name>
    </ligand>
</feature>
<accession>Q608G0</accession>